<name>RBL_ERICA</name>
<proteinExistence type="inferred from homology"/>
<organism>
    <name type="scientific">Eriodictyon californicum</name>
    <name type="common">California yerba santa</name>
    <name type="synonym">Wigandia californica</name>
    <dbReference type="NCBI Taxonomy" id="4132"/>
    <lineage>
        <taxon>Eukaryota</taxon>
        <taxon>Viridiplantae</taxon>
        <taxon>Streptophyta</taxon>
        <taxon>Embryophyta</taxon>
        <taxon>Tracheophyta</taxon>
        <taxon>Spermatophyta</taxon>
        <taxon>Magnoliopsida</taxon>
        <taxon>eudicotyledons</taxon>
        <taxon>Gunneridae</taxon>
        <taxon>Pentapetalae</taxon>
        <taxon>asterids</taxon>
        <taxon>lamiids</taxon>
        <taxon>Boraginales</taxon>
        <taxon>Namaceae</taxon>
        <taxon>Eriodictyon</taxon>
    </lineage>
</organism>
<sequence length="467" mass="51970">SVGFKAGVKEYKLTYYTPEYETKDTDILAAFRVSPQPGVPPEEAGAAVAAESSTGTWTTVWTDGLTSLDRYKGRCYHIDPVPGEEDQYICYVAYPLDLFEEGSVTNMFTSIVGNVFGFKALRALRLEDLRIPPAYVKTFQGPPHGIQVERDKLNKYGRPLLGCTIKPKLGLSAKNYGRAVYECLRGGLDFTKDDENVNSQPFMRWRDRFLFCAEAIYKSQAETGEIKGHYLNATAGNXEEMIKRAVFARELGVPIVMHDYLTGGFTANTSLASYCRDNGLLLHIHRAMHAVIDRQKNHGIHFRVLAKALRMSGGDHIHSGTVVGKLEGERNITLGFVDLLRDDYIEKDRSRGIFFTQDWVSLPGVLPVASGGIHVWHMRALVEIFGDDSVLQFGGGTLGHPWGNAPGAVANRVSLEACVQARNEGRDLAREGNEIVREACKWSPELAAACEVWKEIKFEFKEVDTLD</sequence>
<feature type="chain" id="PRO_0000062461" description="Ribulose bisphosphate carboxylase large chain">
    <location>
        <begin position="1" status="less than"/>
        <end position="467" status="greater than"/>
    </location>
</feature>
<feature type="active site" description="Proton acceptor" evidence="1">
    <location>
        <position position="166"/>
    </location>
</feature>
<feature type="active site" description="Proton acceptor" evidence="1">
    <location>
        <position position="285"/>
    </location>
</feature>
<feature type="binding site" description="in homodimeric partner" evidence="1">
    <location>
        <position position="114"/>
    </location>
    <ligand>
        <name>substrate</name>
    </ligand>
</feature>
<feature type="binding site" evidence="1">
    <location>
        <position position="164"/>
    </location>
    <ligand>
        <name>substrate</name>
    </ligand>
</feature>
<feature type="binding site" evidence="1">
    <location>
        <position position="168"/>
    </location>
    <ligand>
        <name>substrate</name>
    </ligand>
</feature>
<feature type="binding site" description="via carbamate group" evidence="1">
    <location>
        <position position="192"/>
    </location>
    <ligand>
        <name>Mg(2+)</name>
        <dbReference type="ChEBI" id="CHEBI:18420"/>
    </ligand>
</feature>
<feature type="binding site" evidence="1">
    <location>
        <position position="194"/>
    </location>
    <ligand>
        <name>Mg(2+)</name>
        <dbReference type="ChEBI" id="CHEBI:18420"/>
    </ligand>
</feature>
<feature type="binding site" evidence="1">
    <location>
        <position position="195"/>
    </location>
    <ligand>
        <name>Mg(2+)</name>
        <dbReference type="ChEBI" id="CHEBI:18420"/>
    </ligand>
</feature>
<feature type="binding site" evidence="1">
    <location>
        <position position="286"/>
    </location>
    <ligand>
        <name>substrate</name>
    </ligand>
</feature>
<feature type="binding site" evidence="1">
    <location>
        <position position="318"/>
    </location>
    <ligand>
        <name>substrate</name>
    </ligand>
</feature>
<feature type="binding site" evidence="1">
    <location>
        <position position="370"/>
    </location>
    <ligand>
        <name>substrate</name>
    </ligand>
</feature>
<feature type="site" description="Transition state stabilizer" evidence="1">
    <location>
        <position position="325"/>
    </location>
</feature>
<feature type="modified residue" description="N6,N6,N6-trimethyllysine" evidence="1">
    <location>
        <position position="5"/>
    </location>
</feature>
<feature type="modified residue" description="N6-carboxylysine" evidence="1">
    <location>
        <position position="192"/>
    </location>
</feature>
<feature type="disulfide bond" description="Interchain; in linked form" evidence="1">
    <location>
        <position position="238"/>
    </location>
</feature>
<feature type="non-terminal residue">
    <location>
        <position position="1"/>
    </location>
</feature>
<feature type="non-terminal residue">
    <location>
        <position position="467"/>
    </location>
</feature>
<evidence type="ECO:0000255" key="1">
    <source>
        <dbReference type="HAMAP-Rule" id="MF_01338"/>
    </source>
</evidence>
<dbReference type="EC" id="4.1.1.39" evidence="1"/>
<dbReference type="EMBL" id="L01916">
    <property type="protein sequence ID" value="AAA84242.2"/>
    <property type="molecule type" value="Genomic_DNA"/>
</dbReference>
<dbReference type="GO" id="GO:0009507">
    <property type="term" value="C:chloroplast"/>
    <property type="evidence" value="ECO:0007669"/>
    <property type="project" value="UniProtKB-SubCell"/>
</dbReference>
<dbReference type="GO" id="GO:0000287">
    <property type="term" value="F:magnesium ion binding"/>
    <property type="evidence" value="ECO:0007669"/>
    <property type="project" value="InterPro"/>
</dbReference>
<dbReference type="GO" id="GO:0004497">
    <property type="term" value="F:monooxygenase activity"/>
    <property type="evidence" value="ECO:0007669"/>
    <property type="project" value="UniProtKB-KW"/>
</dbReference>
<dbReference type="GO" id="GO:0016984">
    <property type="term" value="F:ribulose-bisphosphate carboxylase activity"/>
    <property type="evidence" value="ECO:0007669"/>
    <property type="project" value="UniProtKB-EC"/>
</dbReference>
<dbReference type="GO" id="GO:0009853">
    <property type="term" value="P:photorespiration"/>
    <property type="evidence" value="ECO:0007669"/>
    <property type="project" value="UniProtKB-KW"/>
</dbReference>
<dbReference type="GO" id="GO:0019253">
    <property type="term" value="P:reductive pentose-phosphate cycle"/>
    <property type="evidence" value="ECO:0007669"/>
    <property type="project" value="UniProtKB-KW"/>
</dbReference>
<dbReference type="CDD" id="cd08212">
    <property type="entry name" value="RuBisCO_large_I"/>
    <property type="match status" value="1"/>
</dbReference>
<dbReference type="FunFam" id="3.20.20.110:FF:000001">
    <property type="entry name" value="Ribulose bisphosphate carboxylase large chain"/>
    <property type="match status" value="1"/>
</dbReference>
<dbReference type="FunFam" id="3.30.70.150:FF:000001">
    <property type="entry name" value="Ribulose bisphosphate carboxylase large chain"/>
    <property type="match status" value="1"/>
</dbReference>
<dbReference type="Gene3D" id="3.20.20.110">
    <property type="entry name" value="Ribulose bisphosphate carboxylase, large subunit, C-terminal domain"/>
    <property type="match status" value="1"/>
</dbReference>
<dbReference type="Gene3D" id="3.30.70.150">
    <property type="entry name" value="RuBisCO large subunit, N-terminal domain"/>
    <property type="match status" value="1"/>
</dbReference>
<dbReference type="HAMAP" id="MF_01338">
    <property type="entry name" value="RuBisCO_L_type1"/>
    <property type="match status" value="1"/>
</dbReference>
<dbReference type="InterPro" id="IPR033966">
    <property type="entry name" value="RuBisCO"/>
</dbReference>
<dbReference type="InterPro" id="IPR020878">
    <property type="entry name" value="RuBisCo_large_chain_AS"/>
</dbReference>
<dbReference type="InterPro" id="IPR000685">
    <property type="entry name" value="RuBisCO_lsu_C"/>
</dbReference>
<dbReference type="InterPro" id="IPR036376">
    <property type="entry name" value="RuBisCO_lsu_C_sf"/>
</dbReference>
<dbReference type="InterPro" id="IPR017443">
    <property type="entry name" value="RuBisCO_lsu_fd_N"/>
</dbReference>
<dbReference type="InterPro" id="IPR036422">
    <property type="entry name" value="RuBisCO_lsu_N_sf"/>
</dbReference>
<dbReference type="InterPro" id="IPR020888">
    <property type="entry name" value="RuBisCO_lsuI"/>
</dbReference>
<dbReference type="NCBIfam" id="NF003252">
    <property type="entry name" value="PRK04208.1"/>
    <property type="match status" value="1"/>
</dbReference>
<dbReference type="PANTHER" id="PTHR42704">
    <property type="entry name" value="RIBULOSE BISPHOSPHATE CARBOXYLASE"/>
    <property type="match status" value="1"/>
</dbReference>
<dbReference type="PANTHER" id="PTHR42704:SF15">
    <property type="entry name" value="RIBULOSE BISPHOSPHATE CARBOXYLASE LARGE CHAIN"/>
    <property type="match status" value="1"/>
</dbReference>
<dbReference type="Pfam" id="PF00016">
    <property type="entry name" value="RuBisCO_large"/>
    <property type="match status" value="1"/>
</dbReference>
<dbReference type="Pfam" id="PF02788">
    <property type="entry name" value="RuBisCO_large_N"/>
    <property type="match status" value="1"/>
</dbReference>
<dbReference type="SFLD" id="SFLDG01052">
    <property type="entry name" value="RuBisCO"/>
    <property type="match status" value="1"/>
</dbReference>
<dbReference type="SFLD" id="SFLDS00014">
    <property type="entry name" value="RuBisCO"/>
    <property type="match status" value="1"/>
</dbReference>
<dbReference type="SFLD" id="SFLDG00301">
    <property type="entry name" value="RuBisCO-like_proteins"/>
    <property type="match status" value="1"/>
</dbReference>
<dbReference type="SUPFAM" id="SSF51649">
    <property type="entry name" value="RuBisCo, C-terminal domain"/>
    <property type="match status" value="1"/>
</dbReference>
<dbReference type="SUPFAM" id="SSF54966">
    <property type="entry name" value="RuBisCO, large subunit, small (N-terminal) domain"/>
    <property type="match status" value="1"/>
</dbReference>
<dbReference type="PROSITE" id="PS00157">
    <property type="entry name" value="RUBISCO_LARGE"/>
    <property type="match status" value="1"/>
</dbReference>
<reference key="1">
    <citation type="journal article" date="1992" name="Science">
        <title>Carnivorous plants: phylogeny and structural evolution.</title>
        <authorList>
            <person name="Albert V.A."/>
            <person name="Williams S.E."/>
            <person name="Chase M.W."/>
        </authorList>
    </citation>
    <scope>NUCLEOTIDE SEQUENCE [GENOMIC DNA]</scope>
</reference>
<comment type="function">
    <text evidence="1">RuBisCO catalyzes two reactions: the carboxylation of D-ribulose 1,5-bisphosphate, the primary event in carbon dioxide fixation, as well as the oxidative fragmentation of the pentose substrate in the photorespiration process. Both reactions occur simultaneously and in competition at the same active site.</text>
</comment>
<comment type="catalytic activity">
    <reaction evidence="1">
        <text>2 (2R)-3-phosphoglycerate + 2 H(+) = D-ribulose 1,5-bisphosphate + CO2 + H2O</text>
        <dbReference type="Rhea" id="RHEA:23124"/>
        <dbReference type="ChEBI" id="CHEBI:15377"/>
        <dbReference type="ChEBI" id="CHEBI:15378"/>
        <dbReference type="ChEBI" id="CHEBI:16526"/>
        <dbReference type="ChEBI" id="CHEBI:57870"/>
        <dbReference type="ChEBI" id="CHEBI:58272"/>
        <dbReference type="EC" id="4.1.1.39"/>
    </reaction>
</comment>
<comment type="catalytic activity">
    <reaction evidence="1">
        <text>D-ribulose 1,5-bisphosphate + O2 = 2-phosphoglycolate + (2R)-3-phosphoglycerate + 2 H(+)</text>
        <dbReference type="Rhea" id="RHEA:36631"/>
        <dbReference type="ChEBI" id="CHEBI:15378"/>
        <dbReference type="ChEBI" id="CHEBI:15379"/>
        <dbReference type="ChEBI" id="CHEBI:57870"/>
        <dbReference type="ChEBI" id="CHEBI:58033"/>
        <dbReference type="ChEBI" id="CHEBI:58272"/>
    </reaction>
</comment>
<comment type="cofactor">
    <cofactor evidence="1">
        <name>Mg(2+)</name>
        <dbReference type="ChEBI" id="CHEBI:18420"/>
    </cofactor>
    <text evidence="1">Binds 1 Mg(2+) ion per subunit.</text>
</comment>
<comment type="subunit">
    <text evidence="1">Heterohexadecamer of 8 large chains and 8 small chains; disulfide-linked. The disulfide link is formed within the large subunit homodimers.</text>
</comment>
<comment type="subcellular location">
    <subcellularLocation>
        <location>Plastid</location>
        <location>Chloroplast</location>
    </subcellularLocation>
</comment>
<comment type="PTM">
    <text evidence="1">The disulfide bond which can form in the large chain dimeric partners within the hexadecamer appears to be associated with oxidative stress and protein turnover.</text>
</comment>
<comment type="miscellaneous">
    <text evidence="1">The basic functional RuBisCO is composed of a large chain homodimer in a 'head-to-tail' conformation. In form I RuBisCO this homodimer is arranged in a barrel-like tetramer with the small subunits forming a tetrameric 'cap' on each end of the 'barrel'.</text>
</comment>
<comment type="similarity">
    <text evidence="1">Belongs to the RuBisCO large chain family. Type I subfamily.</text>
</comment>
<geneLocation type="chloroplast"/>
<protein>
    <recommendedName>
        <fullName evidence="1">Ribulose bisphosphate carboxylase large chain</fullName>
        <shortName evidence="1">RuBisCO large subunit</shortName>
        <ecNumber evidence="1">4.1.1.39</ecNumber>
    </recommendedName>
</protein>
<keyword id="KW-0113">Calvin cycle</keyword>
<keyword id="KW-0120">Carbon dioxide fixation</keyword>
<keyword id="KW-0150">Chloroplast</keyword>
<keyword id="KW-1015">Disulfide bond</keyword>
<keyword id="KW-0456">Lyase</keyword>
<keyword id="KW-0460">Magnesium</keyword>
<keyword id="KW-0479">Metal-binding</keyword>
<keyword id="KW-0488">Methylation</keyword>
<keyword id="KW-0503">Monooxygenase</keyword>
<keyword id="KW-0560">Oxidoreductase</keyword>
<keyword id="KW-0601">Photorespiration</keyword>
<keyword id="KW-0602">Photosynthesis</keyword>
<keyword id="KW-0934">Plastid</keyword>
<gene>
    <name evidence="1" type="primary">rbcL</name>
</gene>
<accession>P28413</accession>